<gene>
    <name evidence="1" type="primary">dctA</name>
    <name type="ordered locus">BMA10229_A1389</name>
</gene>
<accession>A2S603</accession>
<proteinExistence type="inferred from homology"/>
<comment type="function">
    <text evidence="1">Responsible for the transport of dicarboxylates such as succinate, fumarate, and malate from the periplasm across the membrane.</text>
</comment>
<comment type="subcellular location">
    <subcellularLocation>
        <location evidence="1">Cell inner membrane</location>
        <topology evidence="1">Multi-pass membrane protein</topology>
    </subcellularLocation>
</comment>
<comment type="similarity">
    <text evidence="1">Belongs to the dicarboxylate/amino acid:cation symporter (DAACS) (TC 2.A.23) family.</text>
</comment>
<protein>
    <recommendedName>
        <fullName evidence="1">C4-dicarboxylate transport protein</fullName>
    </recommendedName>
</protein>
<dbReference type="EMBL" id="CP000546">
    <property type="protein sequence ID" value="ABN03433.1"/>
    <property type="molecule type" value="Genomic_DNA"/>
</dbReference>
<dbReference type="RefSeq" id="WP_004198288.1">
    <property type="nucleotide sequence ID" value="NC_008836.1"/>
</dbReference>
<dbReference type="SMR" id="A2S603"/>
<dbReference type="KEGG" id="bml:BMA10229_A1389"/>
<dbReference type="HOGENOM" id="CLU_019375_7_0_4"/>
<dbReference type="Proteomes" id="UP000002283">
    <property type="component" value="Chromosome I"/>
</dbReference>
<dbReference type="GO" id="GO:0005886">
    <property type="term" value="C:plasma membrane"/>
    <property type="evidence" value="ECO:0007669"/>
    <property type="project" value="UniProtKB-SubCell"/>
</dbReference>
<dbReference type="GO" id="GO:0015138">
    <property type="term" value="F:fumarate transmembrane transporter activity"/>
    <property type="evidence" value="ECO:0007669"/>
    <property type="project" value="TreeGrafter"/>
</dbReference>
<dbReference type="GO" id="GO:0015366">
    <property type="term" value="F:malate:proton symporter activity"/>
    <property type="evidence" value="ECO:0007669"/>
    <property type="project" value="TreeGrafter"/>
</dbReference>
<dbReference type="GO" id="GO:0015141">
    <property type="term" value="F:succinate transmembrane transporter activity"/>
    <property type="evidence" value="ECO:0007669"/>
    <property type="project" value="TreeGrafter"/>
</dbReference>
<dbReference type="GO" id="GO:0070778">
    <property type="term" value="P:L-aspartate transmembrane transport"/>
    <property type="evidence" value="ECO:0007669"/>
    <property type="project" value="TreeGrafter"/>
</dbReference>
<dbReference type="FunFam" id="1.10.3860.10:FF:000001">
    <property type="entry name" value="C4-dicarboxylate transport protein"/>
    <property type="match status" value="1"/>
</dbReference>
<dbReference type="Gene3D" id="1.10.3860.10">
    <property type="entry name" value="Sodium:dicarboxylate symporter"/>
    <property type="match status" value="1"/>
</dbReference>
<dbReference type="HAMAP" id="MF_01300">
    <property type="entry name" value="C4_dicarb_transport"/>
    <property type="match status" value="1"/>
</dbReference>
<dbReference type="InterPro" id="IPR023954">
    <property type="entry name" value="C4_dicarb_transport"/>
</dbReference>
<dbReference type="InterPro" id="IPR001991">
    <property type="entry name" value="Na-dicarboxylate_symporter"/>
</dbReference>
<dbReference type="InterPro" id="IPR018107">
    <property type="entry name" value="Na-dicarboxylate_symporter_CS"/>
</dbReference>
<dbReference type="InterPro" id="IPR036458">
    <property type="entry name" value="Na:dicarbo_symporter_sf"/>
</dbReference>
<dbReference type="NCBIfam" id="NF002461">
    <property type="entry name" value="PRK01663.1"/>
    <property type="match status" value="1"/>
</dbReference>
<dbReference type="NCBIfam" id="NF009587">
    <property type="entry name" value="PRK13027.1"/>
    <property type="match status" value="1"/>
</dbReference>
<dbReference type="PANTHER" id="PTHR42865:SF1">
    <property type="entry name" value="AEROBIC C4-DICARBOXYLATE TRANSPORT PROTEIN"/>
    <property type="match status" value="1"/>
</dbReference>
<dbReference type="PANTHER" id="PTHR42865">
    <property type="entry name" value="PROTON/GLUTAMATE-ASPARTATE SYMPORTER"/>
    <property type="match status" value="1"/>
</dbReference>
<dbReference type="Pfam" id="PF00375">
    <property type="entry name" value="SDF"/>
    <property type="match status" value="1"/>
</dbReference>
<dbReference type="PRINTS" id="PR00173">
    <property type="entry name" value="EDTRNSPORT"/>
</dbReference>
<dbReference type="SUPFAM" id="SSF118215">
    <property type="entry name" value="Proton glutamate symport protein"/>
    <property type="match status" value="1"/>
</dbReference>
<dbReference type="PROSITE" id="PS00713">
    <property type="entry name" value="NA_DICARBOXYL_SYMP_1"/>
    <property type="match status" value="1"/>
</dbReference>
<feature type="chain" id="PRO_1000067435" description="C4-dicarboxylate transport protein">
    <location>
        <begin position="1"/>
        <end position="428"/>
    </location>
</feature>
<feature type="transmembrane region" description="Helical" evidence="1">
    <location>
        <begin position="8"/>
        <end position="28"/>
    </location>
</feature>
<feature type="transmembrane region" description="Helical" evidence="1">
    <location>
        <begin position="44"/>
        <end position="64"/>
    </location>
</feature>
<feature type="transmembrane region" description="Helical" evidence="1">
    <location>
        <begin position="78"/>
        <end position="98"/>
    </location>
</feature>
<feature type="transmembrane region" description="Helical" evidence="1">
    <location>
        <begin position="148"/>
        <end position="168"/>
    </location>
</feature>
<feature type="transmembrane region" description="Helical" evidence="1">
    <location>
        <begin position="184"/>
        <end position="204"/>
    </location>
</feature>
<feature type="transmembrane region" description="Helical" evidence="1">
    <location>
        <begin position="222"/>
        <end position="242"/>
    </location>
</feature>
<feature type="transmembrane region" description="Helical" evidence="1">
    <location>
        <begin position="307"/>
        <end position="327"/>
    </location>
</feature>
<feature type="transmembrane region" description="Helical" evidence="1">
    <location>
        <begin position="355"/>
        <end position="375"/>
    </location>
</feature>
<reference key="1">
    <citation type="journal article" date="2010" name="Genome Biol. Evol.">
        <title>Continuing evolution of Burkholderia mallei through genome reduction and large-scale rearrangements.</title>
        <authorList>
            <person name="Losada L."/>
            <person name="Ronning C.M."/>
            <person name="DeShazer D."/>
            <person name="Woods D."/>
            <person name="Fedorova N."/>
            <person name="Kim H.S."/>
            <person name="Shabalina S.A."/>
            <person name="Pearson T.R."/>
            <person name="Brinkac L."/>
            <person name="Tan P."/>
            <person name="Nandi T."/>
            <person name="Crabtree J."/>
            <person name="Badger J."/>
            <person name="Beckstrom-Sternberg S."/>
            <person name="Saqib M."/>
            <person name="Schutzer S.E."/>
            <person name="Keim P."/>
            <person name="Nierman W.C."/>
        </authorList>
    </citation>
    <scope>NUCLEOTIDE SEQUENCE [LARGE SCALE GENOMIC DNA]</scope>
    <source>
        <strain>NCTC 10229</strain>
    </source>
</reference>
<name>DCTA_BURM9</name>
<sequence length="428" mass="45287">MKKPFYKVLYVQVIFAIVVGVILGHYYPSLAVDMKPLGDGFIKLIKMVIGPIIFCTVVTGIAGMQDMKKVGRVGGKALLYFEIVSTCALVLGLAATHILRPGVGFNIDPATLNGKEVASYAAKAHGQSSVDFLMHIIPNTMIDAFAQGEILQILLIALLFGSVLAHLGERGRVVTDFIDGITRVLFGIVHIVTKLAPIGAFGAMAFTIGKYGVGSLVPLLKLIGTFYLTSVVFVLVVLGAIARFTGFSIIRFVGYIKEELLIVLGTSSSEAALPQLMEKLEKAGCSRSVVGLVVPTGYLFNLDGTNIYMTMAVLFIAQATNIELTWMQQLTLLAVAMLTSKGASGVTGAGFITLAATLAVVPTIPLSGMVLILGIDRFMSECRALTNIVGNGVATVVVSAWEKELDRAKLRAALSGNGEAAAGEAARV</sequence>
<organism>
    <name type="scientific">Burkholderia mallei (strain NCTC 10229)</name>
    <dbReference type="NCBI Taxonomy" id="412022"/>
    <lineage>
        <taxon>Bacteria</taxon>
        <taxon>Pseudomonadati</taxon>
        <taxon>Pseudomonadota</taxon>
        <taxon>Betaproteobacteria</taxon>
        <taxon>Burkholderiales</taxon>
        <taxon>Burkholderiaceae</taxon>
        <taxon>Burkholderia</taxon>
        <taxon>pseudomallei group</taxon>
    </lineage>
</organism>
<evidence type="ECO:0000255" key="1">
    <source>
        <dbReference type="HAMAP-Rule" id="MF_01300"/>
    </source>
</evidence>
<keyword id="KW-0997">Cell inner membrane</keyword>
<keyword id="KW-1003">Cell membrane</keyword>
<keyword id="KW-0472">Membrane</keyword>
<keyword id="KW-0769">Symport</keyword>
<keyword id="KW-0812">Transmembrane</keyword>
<keyword id="KW-1133">Transmembrane helix</keyword>
<keyword id="KW-0813">Transport</keyword>